<proteinExistence type="inferred from homology"/>
<protein>
    <recommendedName>
        <fullName>Fructose-bisphosphate aldolase 2</fullName>
        <shortName>FBP aldolase</shortName>
        <shortName>FBPA</shortName>
        <ecNumber>4.1.2.13</ecNumber>
    </recommendedName>
    <alternativeName>
        <fullName>Fructose-1,6-bisphosphate aldolase</fullName>
    </alternativeName>
    <alternativeName>
        <fullName>Fructose-bisphosphate aldolase II</fullName>
    </alternativeName>
</protein>
<evidence type="ECO:0000250" key="1"/>
<evidence type="ECO:0000305" key="2"/>
<sequence length="114" mass="12747">LQDIINEFGGAMPQTFGVPVEEIVRGIKMGVRKVNIDTDCRMRMTGQFRRIAEQNKAEFDPRKFLKPAMDAMRDLCKARLEAFGTAGHASKIKVIPMDDMAKRYASGSLAPKTN</sequence>
<organism>
    <name type="scientific">Rhodobacter capsulatus</name>
    <name type="common">Rhodopseudomonas capsulata</name>
    <dbReference type="NCBI Taxonomy" id="1061"/>
    <lineage>
        <taxon>Bacteria</taxon>
        <taxon>Pseudomonadati</taxon>
        <taxon>Pseudomonadota</taxon>
        <taxon>Alphaproteobacteria</taxon>
        <taxon>Rhodobacterales</taxon>
        <taxon>Rhodobacter group</taxon>
        <taxon>Rhodobacter</taxon>
    </lineage>
</organism>
<gene>
    <name type="primary">cbbA</name>
    <name type="synonym">cfxB</name>
</gene>
<accession>P50923</accession>
<reference key="1">
    <citation type="submission" date="1995-04" db="EMBL/GenBank/DDBJ databases">
        <authorList>
            <person name="Larimer F.W."/>
            <person name="Lu T.-Y.S."/>
            <person name="Buley D.M."/>
        </authorList>
    </citation>
    <scope>NUCLEOTIDE SEQUENCE [GENOMIC DNA]</scope>
    <source>
        <strain>ATCC 11166 / DSM 1710 / CCUG 31484 / JCM 21090 / LMG 2962 / NBRC 16435 / NCIMB 8254 / ATH 2.3.1</strain>
    </source>
</reference>
<dbReference type="EC" id="4.1.2.13"/>
<dbReference type="EMBL" id="U23145">
    <property type="protein sequence ID" value="AAB82047.1"/>
    <property type="molecule type" value="Genomic_DNA"/>
</dbReference>
<dbReference type="PIR" id="T10505">
    <property type="entry name" value="T10505"/>
</dbReference>
<dbReference type="SMR" id="P50923"/>
<dbReference type="UniPathway" id="UPA00109">
    <property type="reaction ID" value="UER00183"/>
</dbReference>
<dbReference type="UniPathway" id="UPA00116"/>
<dbReference type="GO" id="GO:0004332">
    <property type="term" value="F:fructose-bisphosphate aldolase activity"/>
    <property type="evidence" value="ECO:0007669"/>
    <property type="project" value="UniProtKB-EC"/>
</dbReference>
<dbReference type="GO" id="GO:0008270">
    <property type="term" value="F:zinc ion binding"/>
    <property type="evidence" value="ECO:0007669"/>
    <property type="project" value="InterPro"/>
</dbReference>
<dbReference type="GO" id="GO:0006096">
    <property type="term" value="P:glycolytic process"/>
    <property type="evidence" value="ECO:0007669"/>
    <property type="project" value="UniProtKB-UniPathway"/>
</dbReference>
<dbReference type="GO" id="GO:0019253">
    <property type="term" value="P:reductive pentose-phosphate cycle"/>
    <property type="evidence" value="ECO:0007669"/>
    <property type="project" value="UniProtKB-UniPathway"/>
</dbReference>
<dbReference type="Gene3D" id="3.20.20.70">
    <property type="entry name" value="Aldolase class I"/>
    <property type="match status" value="1"/>
</dbReference>
<dbReference type="InterPro" id="IPR013785">
    <property type="entry name" value="Aldolase_TIM"/>
</dbReference>
<dbReference type="InterPro" id="IPR050246">
    <property type="entry name" value="Class_II_FBP_aldolase"/>
</dbReference>
<dbReference type="InterPro" id="IPR000771">
    <property type="entry name" value="FBA_II"/>
</dbReference>
<dbReference type="PANTHER" id="PTHR30304">
    <property type="entry name" value="D-TAGATOSE-1,6-BISPHOSPHATE ALDOLASE"/>
    <property type="match status" value="1"/>
</dbReference>
<dbReference type="PANTHER" id="PTHR30304:SF0">
    <property type="entry name" value="D-TAGATOSE-1,6-BISPHOSPHATE ALDOLASE SUBUNIT GATY-RELATED"/>
    <property type="match status" value="1"/>
</dbReference>
<dbReference type="Pfam" id="PF01116">
    <property type="entry name" value="F_bP_aldolase"/>
    <property type="match status" value="1"/>
</dbReference>
<dbReference type="SUPFAM" id="SSF51569">
    <property type="entry name" value="Aldolase"/>
    <property type="match status" value="1"/>
</dbReference>
<name>ALF2_RHOCA</name>
<feature type="chain" id="PRO_0000178732" description="Fructose-bisphosphate aldolase 2">
    <location>
        <begin position="1" status="less than"/>
        <end position="114"/>
    </location>
</feature>
<feature type="binding site" evidence="1">
    <location>
        <begin position="35"/>
        <end position="38"/>
    </location>
    <ligand>
        <name>dihydroxyacetone phosphate</name>
        <dbReference type="ChEBI" id="CHEBI:57642"/>
    </ligand>
</feature>
<feature type="non-terminal residue">
    <location>
        <position position="1"/>
    </location>
</feature>
<keyword id="KW-0113">Calvin cycle</keyword>
<keyword id="KW-0324">Glycolysis</keyword>
<keyword id="KW-0456">Lyase</keyword>
<keyword id="KW-0862">Zinc</keyword>
<comment type="function">
    <text evidence="1">Catalyzes the aldol condensation of dihydroxyacetone phosphate (DHAP or glycerone-phosphate) with glyceraldehyde 3-phosphate (G3P) to form fructose 1,6-bisphosphate (FBP) in gluconeogenesis and the reverse reaction in glycolysis.</text>
</comment>
<comment type="catalytic activity">
    <reaction>
        <text>beta-D-fructose 1,6-bisphosphate = D-glyceraldehyde 3-phosphate + dihydroxyacetone phosphate</text>
        <dbReference type="Rhea" id="RHEA:14729"/>
        <dbReference type="ChEBI" id="CHEBI:32966"/>
        <dbReference type="ChEBI" id="CHEBI:57642"/>
        <dbReference type="ChEBI" id="CHEBI:59776"/>
        <dbReference type="EC" id="4.1.2.13"/>
    </reaction>
</comment>
<comment type="cofactor">
    <cofactor evidence="1">
        <name>Zn(2+)</name>
        <dbReference type="ChEBI" id="CHEBI:29105"/>
    </cofactor>
    <text evidence="1">Binds 2 Zn(2+) ions per subunit. One is catalytic and the other provides a structural contribution.</text>
</comment>
<comment type="pathway">
    <text>Carbohydrate biosynthesis; Calvin cycle.</text>
</comment>
<comment type="pathway">
    <text>Carbohydrate degradation; glycolysis; D-glyceraldehyde 3-phosphate and glycerone phosphate from D-glucose: step 4/4.</text>
</comment>
<comment type="subunit">
    <text evidence="1">Homodimer.</text>
</comment>
<comment type="miscellaneous">
    <text>This protein is encoded within the form II ribulose-bisphosphate carboxylase operon.</text>
</comment>
<comment type="similarity">
    <text evidence="2">Belongs to the class II fructose-bisphosphate aldolase family.</text>
</comment>